<accession>B5FBC5</accession>
<gene>
    <name evidence="1" type="primary">ureE</name>
    <name type="ordered locus">VFMJ11_0690</name>
</gene>
<protein>
    <recommendedName>
        <fullName evidence="1">Urease accessory protein UreE</fullName>
    </recommendedName>
</protein>
<comment type="function">
    <text evidence="1">Involved in urease metallocenter assembly. Binds nickel. Probably functions as a nickel donor during metallocenter assembly.</text>
</comment>
<comment type="subcellular location">
    <subcellularLocation>
        <location evidence="1">Cytoplasm</location>
    </subcellularLocation>
</comment>
<comment type="similarity">
    <text evidence="1">Belongs to the UreE family.</text>
</comment>
<evidence type="ECO:0000255" key="1">
    <source>
        <dbReference type="HAMAP-Rule" id="MF_00822"/>
    </source>
</evidence>
<evidence type="ECO:0000256" key="2">
    <source>
        <dbReference type="SAM" id="MobiDB-lite"/>
    </source>
</evidence>
<proteinExistence type="inferred from homology"/>
<keyword id="KW-0143">Chaperone</keyword>
<keyword id="KW-0963">Cytoplasm</keyword>
<keyword id="KW-0533">Nickel</keyword>
<reference key="1">
    <citation type="submission" date="2008-08" db="EMBL/GenBank/DDBJ databases">
        <title>Complete sequence of Vibrio fischeri strain MJ11.</title>
        <authorList>
            <person name="Mandel M.J."/>
            <person name="Stabb E.V."/>
            <person name="Ruby E.G."/>
            <person name="Ferriera S."/>
            <person name="Johnson J."/>
            <person name="Kravitz S."/>
            <person name="Beeson K."/>
            <person name="Sutton G."/>
            <person name="Rogers Y.-H."/>
            <person name="Friedman R."/>
            <person name="Frazier M."/>
            <person name="Venter J.C."/>
        </authorList>
    </citation>
    <scope>NUCLEOTIDE SEQUENCE [LARGE SCALE GENOMIC DNA]</scope>
    <source>
        <strain>MJ11</strain>
    </source>
</reference>
<feature type="chain" id="PRO_1000197452" description="Urease accessory protein UreE">
    <location>
        <begin position="1"/>
        <end position="163"/>
    </location>
</feature>
<feature type="region of interest" description="Disordered" evidence="2">
    <location>
        <begin position="144"/>
        <end position="163"/>
    </location>
</feature>
<dbReference type="EMBL" id="CP001139">
    <property type="protein sequence ID" value="ACH66463.1"/>
    <property type="molecule type" value="Genomic_DNA"/>
</dbReference>
<dbReference type="RefSeq" id="WP_012533745.1">
    <property type="nucleotide sequence ID" value="NC_011184.1"/>
</dbReference>
<dbReference type="SMR" id="B5FBC5"/>
<dbReference type="KEGG" id="vfm:VFMJ11_0690"/>
<dbReference type="HOGENOM" id="CLU_093757_2_0_6"/>
<dbReference type="Proteomes" id="UP000001857">
    <property type="component" value="Chromosome I"/>
</dbReference>
<dbReference type="GO" id="GO:0005737">
    <property type="term" value="C:cytoplasm"/>
    <property type="evidence" value="ECO:0007669"/>
    <property type="project" value="UniProtKB-SubCell"/>
</dbReference>
<dbReference type="GO" id="GO:0016151">
    <property type="term" value="F:nickel cation binding"/>
    <property type="evidence" value="ECO:0007669"/>
    <property type="project" value="UniProtKB-UniRule"/>
</dbReference>
<dbReference type="GO" id="GO:0051082">
    <property type="term" value="F:unfolded protein binding"/>
    <property type="evidence" value="ECO:0007669"/>
    <property type="project" value="UniProtKB-UniRule"/>
</dbReference>
<dbReference type="GO" id="GO:0006457">
    <property type="term" value="P:protein folding"/>
    <property type="evidence" value="ECO:0007669"/>
    <property type="project" value="InterPro"/>
</dbReference>
<dbReference type="GO" id="GO:0065003">
    <property type="term" value="P:protein-containing complex assembly"/>
    <property type="evidence" value="ECO:0007669"/>
    <property type="project" value="InterPro"/>
</dbReference>
<dbReference type="GO" id="GO:0019627">
    <property type="term" value="P:urea metabolic process"/>
    <property type="evidence" value="ECO:0007669"/>
    <property type="project" value="InterPro"/>
</dbReference>
<dbReference type="CDD" id="cd00571">
    <property type="entry name" value="UreE"/>
    <property type="match status" value="1"/>
</dbReference>
<dbReference type="Gene3D" id="2.60.260.20">
    <property type="entry name" value="Urease metallochaperone UreE, N-terminal domain"/>
    <property type="match status" value="1"/>
</dbReference>
<dbReference type="Gene3D" id="3.30.70.790">
    <property type="entry name" value="UreE, C-terminal domain"/>
    <property type="match status" value="1"/>
</dbReference>
<dbReference type="HAMAP" id="MF_00822">
    <property type="entry name" value="UreE"/>
    <property type="match status" value="1"/>
</dbReference>
<dbReference type="InterPro" id="IPR012406">
    <property type="entry name" value="UreE"/>
</dbReference>
<dbReference type="InterPro" id="IPR007864">
    <property type="entry name" value="UreE_C_dom"/>
</dbReference>
<dbReference type="InterPro" id="IPR004029">
    <property type="entry name" value="UreE_N"/>
</dbReference>
<dbReference type="InterPro" id="IPR036118">
    <property type="entry name" value="UreE_N_sf"/>
</dbReference>
<dbReference type="NCBIfam" id="NF009751">
    <property type="entry name" value="PRK13261.1-1"/>
    <property type="match status" value="1"/>
</dbReference>
<dbReference type="Pfam" id="PF05194">
    <property type="entry name" value="UreE_C"/>
    <property type="match status" value="1"/>
</dbReference>
<dbReference type="Pfam" id="PF02814">
    <property type="entry name" value="UreE_N"/>
    <property type="match status" value="1"/>
</dbReference>
<dbReference type="PIRSF" id="PIRSF036402">
    <property type="entry name" value="Ureas_acces_UreE"/>
    <property type="match status" value="1"/>
</dbReference>
<dbReference type="SMART" id="SM00988">
    <property type="entry name" value="UreE_N"/>
    <property type="match status" value="1"/>
</dbReference>
<dbReference type="SUPFAM" id="SSF69737">
    <property type="entry name" value="Urease metallochaperone UreE, C-terminal domain"/>
    <property type="match status" value="1"/>
</dbReference>
<dbReference type="SUPFAM" id="SSF69287">
    <property type="entry name" value="Urease metallochaperone UreE, N-terminal domain"/>
    <property type="match status" value="1"/>
</dbReference>
<name>UREE_ALIFM</name>
<sequence>MIKFTHLVHHHHDEHHHGEEHTHNTAELTICLTMQERTKSRLKVMLSDGSEAGLFLPRGTVLKEHDIVESDDGVQAMITAAEETVSTVYSDDLLLLAKACYHLGNRHVPLQVEAGWCRYLHDHVLDDMVQRLGLNVKVEQAKYQPEPGAYGGSSAGSHDGHHH</sequence>
<organism>
    <name type="scientific">Aliivibrio fischeri (strain MJ11)</name>
    <name type="common">Vibrio fischeri</name>
    <dbReference type="NCBI Taxonomy" id="388396"/>
    <lineage>
        <taxon>Bacteria</taxon>
        <taxon>Pseudomonadati</taxon>
        <taxon>Pseudomonadota</taxon>
        <taxon>Gammaproteobacteria</taxon>
        <taxon>Vibrionales</taxon>
        <taxon>Vibrionaceae</taxon>
        <taxon>Aliivibrio</taxon>
    </lineage>
</organism>